<reference key="1">
    <citation type="submission" date="2008-02" db="EMBL/GenBank/DDBJ databases">
        <title>Complete sequence of chromosome 1 of Burkholderia cenocepacia MC0-3.</title>
        <authorList>
            <person name="Copeland A."/>
            <person name="Lucas S."/>
            <person name="Lapidus A."/>
            <person name="Barry K."/>
            <person name="Bruce D."/>
            <person name="Goodwin L."/>
            <person name="Glavina del Rio T."/>
            <person name="Dalin E."/>
            <person name="Tice H."/>
            <person name="Pitluck S."/>
            <person name="Chain P."/>
            <person name="Malfatti S."/>
            <person name="Shin M."/>
            <person name="Vergez L."/>
            <person name="Schmutz J."/>
            <person name="Larimer F."/>
            <person name="Land M."/>
            <person name="Hauser L."/>
            <person name="Kyrpides N."/>
            <person name="Mikhailova N."/>
            <person name="Tiedje J."/>
            <person name="Richardson P."/>
        </authorList>
    </citation>
    <scope>NUCLEOTIDE SEQUENCE [LARGE SCALE GENOMIC DNA]</scope>
    <source>
        <strain>MC0-3</strain>
    </source>
</reference>
<protein>
    <recommendedName>
        <fullName evidence="1">Holliday junction branch migration complex subunit RuvA</fullName>
    </recommendedName>
</protein>
<accession>B1JVV4</accession>
<proteinExistence type="inferred from homology"/>
<gene>
    <name evidence="1" type="primary">ruvA</name>
    <name type="ordered locus">Bcenmc03_0656</name>
</gene>
<name>RUVA_BURO0</name>
<dbReference type="EMBL" id="CP000958">
    <property type="protein sequence ID" value="ACA89834.1"/>
    <property type="molecule type" value="Genomic_DNA"/>
</dbReference>
<dbReference type="RefSeq" id="WP_006401679.1">
    <property type="nucleotide sequence ID" value="NC_010508.1"/>
</dbReference>
<dbReference type="SMR" id="B1JVV4"/>
<dbReference type="GeneID" id="89568971"/>
<dbReference type="KEGG" id="bcm:Bcenmc03_0656"/>
<dbReference type="HOGENOM" id="CLU_087936_0_0_4"/>
<dbReference type="Proteomes" id="UP000002169">
    <property type="component" value="Chromosome 1"/>
</dbReference>
<dbReference type="GO" id="GO:0005737">
    <property type="term" value="C:cytoplasm"/>
    <property type="evidence" value="ECO:0007669"/>
    <property type="project" value="UniProtKB-SubCell"/>
</dbReference>
<dbReference type="GO" id="GO:0009379">
    <property type="term" value="C:Holliday junction helicase complex"/>
    <property type="evidence" value="ECO:0007669"/>
    <property type="project" value="InterPro"/>
</dbReference>
<dbReference type="GO" id="GO:0048476">
    <property type="term" value="C:Holliday junction resolvase complex"/>
    <property type="evidence" value="ECO:0007669"/>
    <property type="project" value="UniProtKB-UniRule"/>
</dbReference>
<dbReference type="GO" id="GO:0005524">
    <property type="term" value="F:ATP binding"/>
    <property type="evidence" value="ECO:0007669"/>
    <property type="project" value="InterPro"/>
</dbReference>
<dbReference type="GO" id="GO:0000400">
    <property type="term" value="F:four-way junction DNA binding"/>
    <property type="evidence" value="ECO:0007669"/>
    <property type="project" value="UniProtKB-UniRule"/>
</dbReference>
<dbReference type="GO" id="GO:0009378">
    <property type="term" value="F:four-way junction helicase activity"/>
    <property type="evidence" value="ECO:0007669"/>
    <property type="project" value="InterPro"/>
</dbReference>
<dbReference type="GO" id="GO:0006310">
    <property type="term" value="P:DNA recombination"/>
    <property type="evidence" value="ECO:0007669"/>
    <property type="project" value="UniProtKB-UniRule"/>
</dbReference>
<dbReference type="GO" id="GO:0006281">
    <property type="term" value="P:DNA repair"/>
    <property type="evidence" value="ECO:0007669"/>
    <property type="project" value="UniProtKB-UniRule"/>
</dbReference>
<dbReference type="CDD" id="cd14332">
    <property type="entry name" value="UBA_RuvA_C"/>
    <property type="match status" value="1"/>
</dbReference>
<dbReference type="Gene3D" id="1.10.150.20">
    <property type="entry name" value="5' to 3' exonuclease, C-terminal subdomain"/>
    <property type="match status" value="1"/>
</dbReference>
<dbReference type="Gene3D" id="1.10.8.10">
    <property type="entry name" value="DNA helicase RuvA subunit, C-terminal domain"/>
    <property type="match status" value="1"/>
</dbReference>
<dbReference type="Gene3D" id="2.40.50.140">
    <property type="entry name" value="Nucleic acid-binding proteins"/>
    <property type="match status" value="1"/>
</dbReference>
<dbReference type="HAMAP" id="MF_00031">
    <property type="entry name" value="DNA_HJ_migration_RuvA"/>
    <property type="match status" value="1"/>
</dbReference>
<dbReference type="InterPro" id="IPR013849">
    <property type="entry name" value="DNA_helicase_Holl-junc_RuvA_I"/>
</dbReference>
<dbReference type="InterPro" id="IPR003583">
    <property type="entry name" value="Hlx-hairpin-Hlx_DNA-bd_motif"/>
</dbReference>
<dbReference type="InterPro" id="IPR012340">
    <property type="entry name" value="NA-bd_OB-fold"/>
</dbReference>
<dbReference type="InterPro" id="IPR000085">
    <property type="entry name" value="RuvA"/>
</dbReference>
<dbReference type="InterPro" id="IPR010994">
    <property type="entry name" value="RuvA_2-like"/>
</dbReference>
<dbReference type="InterPro" id="IPR011114">
    <property type="entry name" value="RuvA_C"/>
</dbReference>
<dbReference type="InterPro" id="IPR036267">
    <property type="entry name" value="RuvA_C_sf"/>
</dbReference>
<dbReference type="NCBIfam" id="TIGR00084">
    <property type="entry name" value="ruvA"/>
    <property type="match status" value="1"/>
</dbReference>
<dbReference type="Pfam" id="PF14520">
    <property type="entry name" value="HHH_5"/>
    <property type="match status" value="1"/>
</dbReference>
<dbReference type="Pfam" id="PF07499">
    <property type="entry name" value="RuvA_C"/>
    <property type="match status" value="1"/>
</dbReference>
<dbReference type="Pfam" id="PF01330">
    <property type="entry name" value="RuvA_N"/>
    <property type="match status" value="1"/>
</dbReference>
<dbReference type="SMART" id="SM00278">
    <property type="entry name" value="HhH1"/>
    <property type="match status" value="2"/>
</dbReference>
<dbReference type="SUPFAM" id="SSF46929">
    <property type="entry name" value="DNA helicase RuvA subunit, C-terminal domain"/>
    <property type="match status" value="1"/>
</dbReference>
<dbReference type="SUPFAM" id="SSF50249">
    <property type="entry name" value="Nucleic acid-binding proteins"/>
    <property type="match status" value="1"/>
</dbReference>
<dbReference type="SUPFAM" id="SSF47781">
    <property type="entry name" value="RuvA domain 2-like"/>
    <property type="match status" value="1"/>
</dbReference>
<organism>
    <name type="scientific">Burkholderia orbicola (strain MC0-3)</name>
    <dbReference type="NCBI Taxonomy" id="406425"/>
    <lineage>
        <taxon>Bacteria</taxon>
        <taxon>Pseudomonadati</taxon>
        <taxon>Pseudomonadota</taxon>
        <taxon>Betaproteobacteria</taxon>
        <taxon>Burkholderiales</taxon>
        <taxon>Burkholderiaceae</taxon>
        <taxon>Burkholderia</taxon>
        <taxon>Burkholderia cepacia complex</taxon>
        <taxon>Burkholderia orbicola</taxon>
    </lineage>
</organism>
<evidence type="ECO:0000255" key="1">
    <source>
        <dbReference type="HAMAP-Rule" id="MF_00031"/>
    </source>
</evidence>
<feature type="chain" id="PRO_1000090290" description="Holliday junction branch migration complex subunit RuvA">
    <location>
        <begin position="1"/>
        <end position="193"/>
    </location>
</feature>
<feature type="region of interest" description="Domain I" evidence="1">
    <location>
        <begin position="1"/>
        <end position="64"/>
    </location>
</feature>
<feature type="region of interest" description="Domain II" evidence="1">
    <location>
        <begin position="65"/>
        <end position="139"/>
    </location>
</feature>
<feature type="region of interest" description="Flexible linker" evidence="1">
    <location>
        <begin position="139"/>
        <end position="143"/>
    </location>
</feature>
<feature type="region of interest" description="Domain III" evidence="1">
    <location>
        <begin position="144"/>
        <end position="193"/>
    </location>
</feature>
<keyword id="KW-0963">Cytoplasm</keyword>
<keyword id="KW-0227">DNA damage</keyword>
<keyword id="KW-0233">DNA recombination</keyword>
<keyword id="KW-0234">DNA repair</keyword>
<keyword id="KW-0238">DNA-binding</keyword>
<sequence>MIGRIAGILLEKNPPHLLVDCNGVGYEIDVPMSTFYNLPQTGERVVLLTQQIVREDAHLLYGFLTPQERTTFRELLKITGIGARMALAVLSGMSVQELAQAVTMQDAARLTRLPGIGKKTAERLLLELKGKLGADLGALAGAASASDHATDILNALLALGYSEKEGLAAIKNVPAGTGVSEGIKLALKALSKA</sequence>
<comment type="function">
    <text evidence="1">The RuvA-RuvB-RuvC complex processes Holliday junction (HJ) DNA during genetic recombination and DNA repair, while the RuvA-RuvB complex plays an important role in the rescue of blocked DNA replication forks via replication fork reversal (RFR). RuvA specifically binds to HJ cruciform DNA, conferring on it an open structure. The RuvB hexamer acts as an ATP-dependent pump, pulling dsDNA into and through the RuvAB complex. HJ branch migration allows RuvC to scan DNA until it finds its consensus sequence, where it cleaves and resolves the cruciform DNA.</text>
</comment>
<comment type="subunit">
    <text evidence="1">Homotetramer. Forms an RuvA(8)-RuvB(12)-Holliday junction (HJ) complex. HJ DNA is sandwiched between 2 RuvA tetramers; dsDNA enters through RuvA and exits via RuvB. An RuvB hexamer assembles on each DNA strand where it exits the tetramer. Each RuvB hexamer is contacted by two RuvA subunits (via domain III) on 2 adjacent RuvB subunits; this complex drives branch migration. In the full resolvosome a probable DNA-RuvA(4)-RuvB(12)-RuvC(2) complex forms which resolves the HJ.</text>
</comment>
<comment type="subcellular location">
    <subcellularLocation>
        <location evidence="1">Cytoplasm</location>
    </subcellularLocation>
</comment>
<comment type="domain">
    <text evidence="1">Has three domains with a flexible linker between the domains II and III and assumes an 'L' shape. Domain III is highly mobile and contacts RuvB.</text>
</comment>
<comment type="similarity">
    <text evidence="1">Belongs to the RuvA family.</text>
</comment>